<name>SSB_STRR6</name>
<protein>
    <recommendedName>
        <fullName evidence="1">Single-stranded DNA-binding protein</fullName>
        <shortName evidence="1">SSB</shortName>
    </recommendedName>
</protein>
<keyword id="KW-0227">DNA damage</keyword>
<keyword id="KW-0233">DNA recombination</keyword>
<keyword id="KW-0234">DNA repair</keyword>
<keyword id="KW-0235">DNA replication</keyword>
<keyword id="KW-0238">DNA-binding</keyword>
<keyword id="KW-1185">Reference proteome</keyword>
<organism>
    <name type="scientific">Streptococcus pneumoniae (strain ATCC BAA-255 / R6)</name>
    <dbReference type="NCBI Taxonomy" id="171101"/>
    <lineage>
        <taxon>Bacteria</taxon>
        <taxon>Bacillati</taxon>
        <taxon>Bacillota</taxon>
        <taxon>Bacilli</taxon>
        <taxon>Lactobacillales</taxon>
        <taxon>Streptococcaceae</taxon>
        <taxon>Streptococcus</taxon>
    </lineage>
</organism>
<comment type="function">
    <text evidence="1">Plays an important role in DNA replication, recombination and repair. Binds to ssDNA and to an array of partner proteins to recruit them to their sites of action during DNA metabolism.</text>
</comment>
<comment type="subunit">
    <text evidence="1">Homotetramer.</text>
</comment>
<sequence length="156" mass="17351">MINNVVLVGRMTRDAELRYTPSNVAVATFTLAVNRTFKSQNGEREADFINVVMWRQQAENLANWAKKGSLIGVTGRIQTRSYDNQQGQRVYVTEVVAENFQMLESRSVREGHTGGAYSAPTANYSAPTNSVPDFSRNENPFGATNPLDISDDDLPF</sequence>
<evidence type="ECO:0000255" key="1">
    <source>
        <dbReference type="HAMAP-Rule" id="MF_00984"/>
    </source>
</evidence>
<evidence type="ECO:0000256" key="2">
    <source>
        <dbReference type="SAM" id="MobiDB-lite"/>
    </source>
</evidence>
<accession>P66855</accession>
<accession>Q8DP28</accession>
<accession>Q97PR2</accession>
<dbReference type="EMBL" id="AE007317">
    <property type="protein sequence ID" value="AAL00199.1"/>
    <property type="molecule type" value="Genomic_DNA"/>
</dbReference>
<dbReference type="PIR" id="B98046">
    <property type="entry name" value="B98046"/>
</dbReference>
<dbReference type="RefSeq" id="NP_358988.1">
    <property type="nucleotide sequence ID" value="NC_003098.1"/>
</dbReference>
<dbReference type="SMR" id="P66855"/>
<dbReference type="STRING" id="171101.spr1395"/>
<dbReference type="KEGG" id="spr:spr1395"/>
<dbReference type="PATRIC" id="fig|171101.6.peg.1510"/>
<dbReference type="eggNOG" id="COG0629">
    <property type="taxonomic scope" value="Bacteria"/>
</dbReference>
<dbReference type="HOGENOM" id="CLU_078758_6_2_9"/>
<dbReference type="Proteomes" id="UP000000586">
    <property type="component" value="Chromosome"/>
</dbReference>
<dbReference type="GO" id="GO:0009295">
    <property type="term" value="C:nucleoid"/>
    <property type="evidence" value="ECO:0000318"/>
    <property type="project" value="GO_Central"/>
</dbReference>
<dbReference type="GO" id="GO:0008047">
    <property type="term" value="F:enzyme activator activity"/>
    <property type="evidence" value="ECO:0000318"/>
    <property type="project" value="GO_Central"/>
</dbReference>
<dbReference type="GO" id="GO:0003697">
    <property type="term" value="F:single-stranded DNA binding"/>
    <property type="evidence" value="ECO:0000318"/>
    <property type="project" value="GO_Central"/>
</dbReference>
<dbReference type="GO" id="GO:0006310">
    <property type="term" value="P:DNA recombination"/>
    <property type="evidence" value="ECO:0007669"/>
    <property type="project" value="UniProtKB-UniRule"/>
</dbReference>
<dbReference type="GO" id="GO:0006281">
    <property type="term" value="P:DNA repair"/>
    <property type="evidence" value="ECO:0007669"/>
    <property type="project" value="UniProtKB-UniRule"/>
</dbReference>
<dbReference type="GO" id="GO:0006260">
    <property type="term" value="P:DNA replication"/>
    <property type="evidence" value="ECO:0000318"/>
    <property type="project" value="GO_Central"/>
</dbReference>
<dbReference type="CDD" id="cd04496">
    <property type="entry name" value="SSB_OBF"/>
    <property type="match status" value="1"/>
</dbReference>
<dbReference type="FunFam" id="2.40.50.140:FF:000084">
    <property type="entry name" value="Single-stranded DNA-binding protein"/>
    <property type="match status" value="1"/>
</dbReference>
<dbReference type="Gene3D" id="2.40.50.140">
    <property type="entry name" value="Nucleic acid-binding proteins"/>
    <property type="match status" value="1"/>
</dbReference>
<dbReference type="HAMAP" id="MF_00984">
    <property type="entry name" value="SSB"/>
    <property type="match status" value="1"/>
</dbReference>
<dbReference type="InterPro" id="IPR012340">
    <property type="entry name" value="NA-bd_OB-fold"/>
</dbReference>
<dbReference type="InterPro" id="IPR000424">
    <property type="entry name" value="Primosome_PriB/ssb"/>
</dbReference>
<dbReference type="InterPro" id="IPR011344">
    <property type="entry name" value="ssDNA-bd"/>
</dbReference>
<dbReference type="NCBIfam" id="NF005580">
    <property type="entry name" value="PRK07275.1"/>
    <property type="match status" value="1"/>
</dbReference>
<dbReference type="NCBIfam" id="TIGR00621">
    <property type="entry name" value="ssb"/>
    <property type="match status" value="1"/>
</dbReference>
<dbReference type="PANTHER" id="PTHR10302">
    <property type="entry name" value="SINGLE-STRANDED DNA-BINDING PROTEIN"/>
    <property type="match status" value="1"/>
</dbReference>
<dbReference type="PANTHER" id="PTHR10302:SF27">
    <property type="entry name" value="SINGLE-STRANDED DNA-BINDING PROTEIN"/>
    <property type="match status" value="1"/>
</dbReference>
<dbReference type="Pfam" id="PF00436">
    <property type="entry name" value="SSB"/>
    <property type="match status" value="1"/>
</dbReference>
<dbReference type="PIRSF" id="PIRSF002070">
    <property type="entry name" value="SSB"/>
    <property type="match status" value="1"/>
</dbReference>
<dbReference type="SUPFAM" id="SSF50249">
    <property type="entry name" value="Nucleic acid-binding proteins"/>
    <property type="match status" value="1"/>
</dbReference>
<dbReference type="PROSITE" id="PS50935">
    <property type="entry name" value="SSB"/>
    <property type="match status" value="1"/>
</dbReference>
<feature type="chain" id="PRO_0000096125" description="Single-stranded DNA-binding protein">
    <location>
        <begin position="1"/>
        <end position="156"/>
    </location>
</feature>
<feature type="domain" description="SSB" evidence="1">
    <location>
        <begin position="1"/>
        <end position="104"/>
    </location>
</feature>
<feature type="region of interest" description="Disordered" evidence="2">
    <location>
        <begin position="111"/>
        <end position="156"/>
    </location>
</feature>
<feature type="short sequence motif" description="Important for interaction with partner proteins" evidence="1">
    <location>
        <begin position="151"/>
        <end position="156"/>
    </location>
</feature>
<feature type="compositionally biased region" description="Polar residues" evidence="2">
    <location>
        <begin position="120"/>
        <end position="132"/>
    </location>
</feature>
<proteinExistence type="inferred from homology"/>
<gene>
    <name type="primary">ssb</name>
    <name type="ordered locus">spr1395</name>
</gene>
<reference key="1">
    <citation type="journal article" date="2001" name="J. Bacteriol.">
        <title>Genome of the bacterium Streptococcus pneumoniae strain R6.</title>
        <authorList>
            <person name="Hoskins J."/>
            <person name="Alborn W.E. Jr."/>
            <person name="Arnold J."/>
            <person name="Blaszczak L.C."/>
            <person name="Burgett S."/>
            <person name="DeHoff B.S."/>
            <person name="Estrem S.T."/>
            <person name="Fritz L."/>
            <person name="Fu D.-J."/>
            <person name="Fuller W."/>
            <person name="Geringer C."/>
            <person name="Gilmour R."/>
            <person name="Glass J.S."/>
            <person name="Khoja H."/>
            <person name="Kraft A.R."/>
            <person name="Lagace R.E."/>
            <person name="LeBlanc D.J."/>
            <person name="Lee L.N."/>
            <person name="Lefkowitz E.J."/>
            <person name="Lu J."/>
            <person name="Matsushima P."/>
            <person name="McAhren S.M."/>
            <person name="McHenney M."/>
            <person name="McLeaster K."/>
            <person name="Mundy C.W."/>
            <person name="Nicas T.I."/>
            <person name="Norris F.H."/>
            <person name="O'Gara M."/>
            <person name="Peery R.B."/>
            <person name="Robertson G.T."/>
            <person name="Rockey P."/>
            <person name="Sun P.-M."/>
            <person name="Winkler M.E."/>
            <person name="Yang Y."/>
            <person name="Young-Bellido M."/>
            <person name="Zhao G."/>
            <person name="Zook C.A."/>
            <person name="Baltz R.H."/>
            <person name="Jaskunas S.R."/>
            <person name="Rosteck P.R. Jr."/>
            <person name="Skatrud P.L."/>
            <person name="Glass J.I."/>
        </authorList>
    </citation>
    <scope>NUCLEOTIDE SEQUENCE [LARGE SCALE GENOMIC DNA]</scope>
    <source>
        <strain>ATCC BAA-255 / R6</strain>
    </source>
</reference>